<evidence type="ECO:0000255" key="1">
    <source>
        <dbReference type="HAMAP-Rule" id="MF_01310"/>
    </source>
</evidence>
<evidence type="ECO:0000305" key="2"/>
<name>RS11_BACC3</name>
<sequence>MARKTNTRKKRVKKNIEAGVAHIRSTFNNTIVTLTDTHGNALSWSSAGALGFRGSRKSTPFAAQMAAETAAKAAMEHGLKTLEVTVKGPGAGREAAIRALQAAGLEVTAIRDVTPVPHNGCRPPKRRRV</sequence>
<feature type="chain" id="PRO_1000165529" description="Small ribosomal subunit protein uS11">
    <location>
        <begin position="1"/>
        <end position="129"/>
    </location>
</feature>
<comment type="function">
    <text evidence="1">Located on the platform of the 30S subunit, it bridges several disparate RNA helices of the 16S rRNA. Forms part of the Shine-Dalgarno cleft in the 70S ribosome.</text>
</comment>
<comment type="subunit">
    <text evidence="1">Part of the 30S ribosomal subunit. Interacts with proteins S7 and S18. Binds to IF-3.</text>
</comment>
<comment type="similarity">
    <text evidence="1">Belongs to the universal ribosomal protein uS11 family.</text>
</comment>
<gene>
    <name evidence="1" type="primary">rpsK</name>
    <name type="ordered locus">BCA_0165</name>
</gene>
<keyword id="KW-0687">Ribonucleoprotein</keyword>
<keyword id="KW-0689">Ribosomal protein</keyword>
<keyword id="KW-0694">RNA-binding</keyword>
<keyword id="KW-0699">rRNA-binding</keyword>
<proteinExistence type="inferred from homology"/>
<organism>
    <name type="scientific">Bacillus cereus (strain 03BB102)</name>
    <dbReference type="NCBI Taxonomy" id="572264"/>
    <lineage>
        <taxon>Bacteria</taxon>
        <taxon>Bacillati</taxon>
        <taxon>Bacillota</taxon>
        <taxon>Bacilli</taxon>
        <taxon>Bacillales</taxon>
        <taxon>Bacillaceae</taxon>
        <taxon>Bacillus</taxon>
        <taxon>Bacillus cereus group</taxon>
    </lineage>
</organism>
<dbReference type="EMBL" id="CP001407">
    <property type="protein sequence ID" value="ACO30896.1"/>
    <property type="molecule type" value="Genomic_DNA"/>
</dbReference>
<dbReference type="RefSeq" id="WP_000101799.1">
    <property type="nucleotide sequence ID" value="NZ_CP009318.1"/>
</dbReference>
<dbReference type="SMR" id="C1ET65"/>
<dbReference type="GeneID" id="93010917"/>
<dbReference type="KEGG" id="bcx:BCA_0165"/>
<dbReference type="PATRIC" id="fig|572264.18.peg.200"/>
<dbReference type="Proteomes" id="UP000002210">
    <property type="component" value="Chromosome"/>
</dbReference>
<dbReference type="GO" id="GO:1990904">
    <property type="term" value="C:ribonucleoprotein complex"/>
    <property type="evidence" value="ECO:0007669"/>
    <property type="project" value="UniProtKB-KW"/>
</dbReference>
<dbReference type="GO" id="GO:0005840">
    <property type="term" value="C:ribosome"/>
    <property type="evidence" value="ECO:0007669"/>
    <property type="project" value="UniProtKB-KW"/>
</dbReference>
<dbReference type="GO" id="GO:0019843">
    <property type="term" value="F:rRNA binding"/>
    <property type="evidence" value="ECO:0007669"/>
    <property type="project" value="UniProtKB-UniRule"/>
</dbReference>
<dbReference type="GO" id="GO:0003735">
    <property type="term" value="F:structural constituent of ribosome"/>
    <property type="evidence" value="ECO:0007669"/>
    <property type="project" value="InterPro"/>
</dbReference>
<dbReference type="GO" id="GO:0006412">
    <property type="term" value="P:translation"/>
    <property type="evidence" value="ECO:0007669"/>
    <property type="project" value="UniProtKB-UniRule"/>
</dbReference>
<dbReference type="FunFam" id="3.30.420.80:FF:000001">
    <property type="entry name" value="30S ribosomal protein S11"/>
    <property type="match status" value="1"/>
</dbReference>
<dbReference type="Gene3D" id="3.30.420.80">
    <property type="entry name" value="Ribosomal protein S11"/>
    <property type="match status" value="1"/>
</dbReference>
<dbReference type="HAMAP" id="MF_01310">
    <property type="entry name" value="Ribosomal_uS11"/>
    <property type="match status" value="1"/>
</dbReference>
<dbReference type="InterPro" id="IPR001971">
    <property type="entry name" value="Ribosomal_uS11"/>
</dbReference>
<dbReference type="InterPro" id="IPR019981">
    <property type="entry name" value="Ribosomal_uS11_bac-type"/>
</dbReference>
<dbReference type="InterPro" id="IPR018102">
    <property type="entry name" value="Ribosomal_uS11_CS"/>
</dbReference>
<dbReference type="InterPro" id="IPR036967">
    <property type="entry name" value="Ribosomal_uS11_sf"/>
</dbReference>
<dbReference type="NCBIfam" id="NF003698">
    <property type="entry name" value="PRK05309.1"/>
    <property type="match status" value="1"/>
</dbReference>
<dbReference type="NCBIfam" id="TIGR03632">
    <property type="entry name" value="uS11_bact"/>
    <property type="match status" value="1"/>
</dbReference>
<dbReference type="PANTHER" id="PTHR11759">
    <property type="entry name" value="40S RIBOSOMAL PROTEIN S14/30S RIBOSOMAL PROTEIN S11"/>
    <property type="match status" value="1"/>
</dbReference>
<dbReference type="Pfam" id="PF00411">
    <property type="entry name" value="Ribosomal_S11"/>
    <property type="match status" value="1"/>
</dbReference>
<dbReference type="PIRSF" id="PIRSF002131">
    <property type="entry name" value="Ribosomal_S11"/>
    <property type="match status" value="1"/>
</dbReference>
<dbReference type="SUPFAM" id="SSF53137">
    <property type="entry name" value="Translational machinery components"/>
    <property type="match status" value="1"/>
</dbReference>
<dbReference type="PROSITE" id="PS00054">
    <property type="entry name" value="RIBOSOMAL_S11"/>
    <property type="match status" value="1"/>
</dbReference>
<accession>C1ET65</accession>
<reference key="1">
    <citation type="submission" date="2009-02" db="EMBL/GenBank/DDBJ databases">
        <title>Genome sequence of Bacillus cereus 03BB102.</title>
        <authorList>
            <person name="Dodson R.J."/>
            <person name="Jackson P."/>
            <person name="Munk A.C."/>
            <person name="Brettin T."/>
            <person name="Bruce D."/>
            <person name="Detter C."/>
            <person name="Tapia R."/>
            <person name="Han C."/>
            <person name="Sutton G."/>
            <person name="Sims D."/>
        </authorList>
    </citation>
    <scope>NUCLEOTIDE SEQUENCE [LARGE SCALE GENOMIC DNA]</scope>
    <source>
        <strain>03BB102</strain>
    </source>
</reference>
<protein>
    <recommendedName>
        <fullName evidence="1">Small ribosomal subunit protein uS11</fullName>
    </recommendedName>
    <alternativeName>
        <fullName evidence="2">30S ribosomal protein S11</fullName>
    </alternativeName>
</protein>